<name>RXLRY_PHYIT</name>
<dbReference type="EMBL" id="DS028196">
    <property type="protein sequence ID" value="EEY68917.1"/>
    <property type="molecule type" value="Genomic_DNA"/>
</dbReference>
<dbReference type="RefSeq" id="XP_002997303.1">
    <property type="nucleotide sequence ID" value="XM_002997257.1"/>
</dbReference>
<dbReference type="STRING" id="403677.D0NZA8"/>
<dbReference type="EnsemblProtists" id="PITG_18670T0">
    <property type="protein sequence ID" value="PITG_18670T0"/>
    <property type="gene ID" value="PITG_18670"/>
</dbReference>
<dbReference type="GeneID" id="9477111"/>
<dbReference type="KEGG" id="pif:PITG_18670"/>
<dbReference type="VEuPathDB" id="FungiDB:PITG_18670"/>
<dbReference type="HOGENOM" id="CLU_158959_0_0_1"/>
<dbReference type="InParanoid" id="D0NZA8"/>
<dbReference type="Proteomes" id="UP000006643">
    <property type="component" value="Partially assembled WGS sequence"/>
</dbReference>
<dbReference type="GO" id="GO:0005576">
    <property type="term" value="C:extracellular region"/>
    <property type="evidence" value="ECO:0007669"/>
    <property type="project" value="UniProtKB-SubCell"/>
</dbReference>
<dbReference type="GO" id="GO:0030430">
    <property type="term" value="C:host cell cytoplasm"/>
    <property type="evidence" value="ECO:0007669"/>
    <property type="project" value="UniProtKB-SubCell"/>
</dbReference>
<dbReference type="GO" id="GO:0044196">
    <property type="term" value="C:host cell nucleolus"/>
    <property type="evidence" value="ECO:0007669"/>
    <property type="project" value="UniProtKB-SubCell"/>
</dbReference>
<sequence>MRSIFYFALAFAALTCSNASAAFPNPDETRLLPDTFTKRSLRVAGQEVARGDRGEEIVRVIVQSTNKIFKRPAEKDMSKLIAAAKIAMLEKKMAKLSFVGKKAAK</sequence>
<gene>
    <name type="ORF">PITG_18670</name>
</gene>
<accession>D0NZA8</accession>
<feature type="signal peptide" evidence="1">
    <location>
        <begin position="1"/>
        <end position="21"/>
    </location>
</feature>
<feature type="chain" id="PRO_5003013822" description="RxLR effector protein PITG_18670">
    <location>
        <begin position="22"/>
        <end position="105"/>
    </location>
</feature>
<feature type="short sequence motif" description="RxLR-dEER" evidence="8">
    <location>
        <begin position="39"/>
        <end position="57"/>
    </location>
</feature>
<keyword id="KW-1035">Host cytoplasm</keyword>
<keyword id="KW-1048">Host nucleus</keyword>
<keyword id="KW-1185">Reference proteome</keyword>
<keyword id="KW-0964">Secreted</keyword>
<keyword id="KW-0732">Signal</keyword>
<keyword id="KW-0843">Virulence</keyword>
<protein>
    <recommendedName>
        <fullName evidence="6">RxLR effector protein PITG_18670</fullName>
    </recommendedName>
</protein>
<proteinExistence type="evidence at transcript level"/>
<comment type="function">
    <text evidence="5">Effector that enhances P.infestans colonization of Nicotiana benthamiana leaves.</text>
</comment>
<comment type="subcellular location">
    <subcellularLocation>
        <location evidence="5">Secreted</location>
    </subcellularLocation>
    <subcellularLocation>
        <location evidence="5">Host nucleus</location>
        <location evidence="5">Host nucleolus</location>
    </subcellularLocation>
    <subcellularLocation>
        <location evidence="5">Host nucleus</location>
    </subcellularLocation>
    <subcellularLocation>
        <location evidence="5">Host cytoplasm</location>
    </subcellularLocation>
</comment>
<comment type="induction">
    <text evidence="2 3 4">Expression is induced during host plant infection.</text>
</comment>
<comment type="domain">
    <text evidence="8">The RxLR-dEER motif acts to carry the protein into the host cell cytoplasm through binding to cell surface phosphatidylinositol-3-phosphate.</text>
</comment>
<comment type="similarity">
    <text evidence="7">Belongs to the RxLR effector family.</text>
</comment>
<evidence type="ECO:0000255" key="1"/>
<evidence type="ECO:0000269" key="2">
    <source>
    </source>
</evidence>
<evidence type="ECO:0000269" key="3">
    <source>
    </source>
</evidence>
<evidence type="ECO:0000269" key="4">
    <source>
    </source>
</evidence>
<evidence type="ECO:0000269" key="5">
    <source>
    </source>
</evidence>
<evidence type="ECO:0000303" key="6">
    <source>
    </source>
</evidence>
<evidence type="ECO:0000305" key="7"/>
<evidence type="ECO:0000305" key="8">
    <source>
    </source>
</evidence>
<reference key="1">
    <citation type="journal article" date="2009" name="Nature">
        <title>Genome sequence and analysis of the Irish potato famine pathogen Phytophthora infestans.</title>
        <authorList>
            <consortium name="The Broad Institute Genome Sequencing Platform"/>
            <person name="Haas B.J."/>
            <person name="Kamoun S."/>
            <person name="Zody M.C."/>
            <person name="Jiang R.H."/>
            <person name="Handsaker R.E."/>
            <person name="Cano L.M."/>
            <person name="Grabherr M."/>
            <person name="Kodira C.D."/>
            <person name="Raffaele S."/>
            <person name="Torto-Alalibo T."/>
            <person name="Bozkurt T.O."/>
            <person name="Ah-Fong A.M."/>
            <person name="Alvarado L."/>
            <person name="Anderson V.L."/>
            <person name="Armstrong M.R."/>
            <person name="Avrova A."/>
            <person name="Baxter L."/>
            <person name="Beynon J."/>
            <person name="Boevink P.C."/>
            <person name="Bollmann S.R."/>
            <person name="Bos J.I."/>
            <person name="Bulone V."/>
            <person name="Cai G."/>
            <person name="Cakir C."/>
            <person name="Carrington J.C."/>
            <person name="Chawner M."/>
            <person name="Conti L."/>
            <person name="Costanzo S."/>
            <person name="Ewan R."/>
            <person name="Fahlgren N."/>
            <person name="Fischbach M.A."/>
            <person name="Fugelstad J."/>
            <person name="Gilroy E.M."/>
            <person name="Gnerre S."/>
            <person name="Green P.J."/>
            <person name="Grenville-Briggs L.J."/>
            <person name="Griffith J."/>
            <person name="Grunwald N.J."/>
            <person name="Horn K."/>
            <person name="Horner N.R."/>
            <person name="Hu C.H."/>
            <person name="Huitema E."/>
            <person name="Jeong D.H."/>
            <person name="Jones A.M."/>
            <person name="Jones J.D."/>
            <person name="Jones R.W."/>
            <person name="Karlsson E.K."/>
            <person name="Kunjeti S.G."/>
            <person name="Lamour K."/>
            <person name="Liu Z."/>
            <person name="Ma L."/>
            <person name="Maclean D."/>
            <person name="Chibucos M.C."/>
            <person name="McDonald H."/>
            <person name="McWalters J."/>
            <person name="Meijer H.J."/>
            <person name="Morgan W."/>
            <person name="Morris P.F."/>
            <person name="Munro C.A."/>
            <person name="O'Neill K."/>
            <person name="Ospina-Giraldo M."/>
            <person name="Pinzon A."/>
            <person name="Pritchard L."/>
            <person name="Ramsahoye B."/>
            <person name="Ren Q."/>
            <person name="Restrepo S."/>
            <person name="Roy S."/>
            <person name="Sadanandom A."/>
            <person name="Savidor A."/>
            <person name="Schornack S."/>
            <person name="Schwartz D.C."/>
            <person name="Schumann U.D."/>
            <person name="Schwessinger B."/>
            <person name="Seyer L."/>
            <person name="Sharpe T."/>
            <person name="Silvar C."/>
            <person name="Song J."/>
            <person name="Studholme D.J."/>
            <person name="Sykes S."/>
            <person name="Thines M."/>
            <person name="van de Vondervoort P.J."/>
            <person name="Phuntumart V."/>
            <person name="Wawra S."/>
            <person name="Weide R."/>
            <person name="Win J."/>
            <person name="Young C."/>
            <person name="Zhou S."/>
            <person name="Fry W."/>
            <person name="Meyers B.C."/>
            <person name="van West P."/>
            <person name="Ristaino J."/>
            <person name="Govers F."/>
            <person name="Birch P.R."/>
            <person name="Whisson S.C."/>
            <person name="Judelson H.S."/>
            <person name="Nusbaum C."/>
        </authorList>
    </citation>
    <scope>NUCLEOTIDE SEQUENCE [LARGE SCALE GENOMIC DNA]</scope>
    <scope>INDUCTION</scope>
    <source>
        <strain>T30-4</strain>
    </source>
</reference>
<reference key="2">
    <citation type="journal article" date="2017" name="BMC Genomics">
        <title>RNA-seq of life stages of the oomycete Phytophthora infestans reveals dynamic changes in metabolic, signal transduction, and pathogenesis genes and a major role for calcium signaling in development.</title>
        <authorList>
            <person name="Ah-Fong A.M."/>
            <person name="Kim K.S."/>
            <person name="Judelson H.S."/>
        </authorList>
    </citation>
    <scope>INDUCTION</scope>
</reference>
<reference key="3">
    <citation type="journal article" date="2017" name="Front. Plant Sci.">
        <title>Conserved RXLR effector genes of Phytophthora infestans expressed at the early stage of potato infection are suppressive to host defense.</title>
        <authorList>
            <person name="Yin J."/>
            <person name="Gu B."/>
            <person name="Huang G."/>
            <person name="Tian Y."/>
            <person name="Quan J."/>
            <person name="Lindqvist-Kreuze H."/>
            <person name="Shan W."/>
        </authorList>
    </citation>
    <scope>INDUCTION</scope>
    <scope>DOMAIN</scope>
</reference>
<reference key="4">
    <citation type="journal article" date="2019" name="J. Exp. Bot.">
        <title>Phytophthora infestans RXLR effectors act in concert at diverse subcellular locations to enhance host colonization.</title>
        <authorList>
            <person name="Wang S."/>
            <person name="McLellan H."/>
            <person name="Bukharova T."/>
            <person name="He Q."/>
            <person name="Murphy F."/>
            <person name="Shi J."/>
            <person name="Sun S."/>
            <person name="van Weymers P."/>
            <person name="Ren Y."/>
            <person name="Thilliez G."/>
            <person name="Wang H."/>
            <person name="Chen X."/>
            <person name="Engelhardt S."/>
            <person name="Vleeshouwers V."/>
            <person name="Gilroy E.M."/>
            <person name="Whisson S.C."/>
            <person name="Hein I."/>
            <person name="Wang X."/>
            <person name="Tian Z."/>
            <person name="Birch P.R.J."/>
            <person name="Boevink P.C."/>
        </authorList>
    </citation>
    <scope>FUNCTION</scope>
    <scope>SUBCELLULAR LOCATION</scope>
</reference>
<organism>
    <name type="scientific">Phytophthora infestans (strain T30-4)</name>
    <name type="common">Potato late blight agent</name>
    <dbReference type="NCBI Taxonomy" id="403677"/>
    <lineage>
        <taxon>Eukaryota</taxon>
        <taxon>Sar</taxon>
        <taxon>Stramenopiles</taxon>
        <taxon>Oomycota</taxon>
        <taxon>Peronosporales</taxon>
        <taxon>Peronosporaceae</taxon>
        <taxon>Phytophthora</taxon>
    </lineage>
</organism>